<sequence>MAERNYTVVTEFFLTAFTEHLQWRVPLFLIFLSFYLATMLGNTGMILLIRGDRRLHTPMYFFLSHLSLVDICYSSAIIPQMLAVLWEHGTTISQARCAAQFFLFTFFASIDCYLLAIMAYDRYTAVCQPLLYVTIITEKARWGLVTGAYVAGFFSAFVRTVTAFTLSFCGNNEINFIFCDLPPLLKLSCGDSYTQEVVIIVFALFVMPACILVILVSYLFIIVAILQIHSAGGRAKTFSTCASHLTAVALFFGTLIFMYLRDNTGQSSEGDRVVSVLYTVVTPMLNPLIYSLRNKEVKEATRKALSKSKPARRP</sequence>
<comment type="function">
    <text evidence="3">Odorant receptor.</text>
</comment>
<comment type="subcellular location">
    <subcellularLocation>
        <location>Cell membrane</location>
        <topology>Multi-pass membrane protein</topology>
    </subcellularLocation>
</comment>
<comment type="similarity">
    <text evidence="2">Belongs to the G-protein coupled receptor 1 family.</text>
</comment>
<comment type="online information" name="Human Olfactory Receptor Data Exploratorium (HORDE)">
    <link uri="http://genome.weizmann.ac.il/horde/card/index/symbol:OR9Q2"/>
</comment>
<protein>
    <recommendedName>
        <fullName>Olfactory receptor 9Q2</fullName>
    </recommendedName>
</protein>
<evidence type="ECO:0000255" key="1"/>
<evidence type="ECO:0000255" key="2">
    <source>
        <dbReference type="PROSITE-ProRule" id="PRU00521"/>
    </source>
</evidence>
<evidence type="ECO:0000305" key="3"/>
<gene>
    <name type="primary">OR9Q2</name>
    <name type="synonym">OR9Q2P</name>
</gene>
<dbReference type="EMBL" id="AB065859">
    <property type="protein sequence ID" value="BAC06077.1"/>
    <property type="molecule type" value="Genomic_DNA"/>
</dbReference>
<dbReference type="EMBL" id="BC140718">
    <property type="protein sequence ID" value="AAI40719.1"/>
    <property type="molecule type" value="mRNA"/>
</dbReference>
<dbReference type="CCDS" id="CCDS31544.1"/>
<dbReference type="RefSeq" id="NP_001005283.1">
    <property type="nucleotide sequence ID" value="NM_001005283.3"/>
</dbReference>
<dbReference type="SMR" id="Q8NGE9"/>
<dbReference type="BioGRID" id="128601">
    <property type="interactions" value="4"/>
</dbReference>
<dbReference type="FunCoup" id="Q8NGE9">
    <property type="interactions" value="416"/>
</dbReference>
<dbReference type="IntAct" id="Q8NGE9">
    <property type="interactions" value="1"/>
</dbReference>
<dbReference type="STRING" id="9606.ENSP00000492924"/>
<dbReference type="GlyCosmos" id="Q8NGE9">
    <property type="glycosylation" value="1 site, No reported glycans"/>
</dbReference>
<dbReference type="GlyGen" id="Q8NGE9">
    <property type="glycosylation" value="1 site"/>
</dbReference>
<dbReference type="BioMuta" id="OR9Q2"/>
<dbReference type="DMDM" id="74762579"/>
<dbReference type="MassIVE" id="Q8NGE9"/>
<dbReference type="PaxDb" id="9606-ENSP00000308714"/>
<dbReference type="Antibodypedia" id="58755">
    <property type="antibodies" value="54 antibodies from 18 providers"/>
</dbReference>
<dbReference type="DNASU" id="219957"/>
<dbReference type="Ensembl" id="ENST00000641291.1">
    <property type="protein sequence ID" value="ENSP00000492924.1"/>
    <property type="gene ID" value="ENSG00000186513.4"/>
</dbReference>
<dbReference type="GeneID" id="219957"/>
<dbReference type="KEGG" id="hsa:219957"/>
<dbReference type="MANE-Select" id="ENST00000641291.1">
    <property type="protein sequence ID" value="ENSP00000492924.1"/>
    <property type="RefSeq nucleotide sequence ID" value="NM_001005283.3"/>
    <property type="RefSeq protein sequence ID" value="NP_001005283.1"/>
</dbReference>
<dbReference type="UCSC" id="uc010rka.2">
    <property type="organism name" value="human"/>
</dbReference>
<dbReference type="AGR" id="HGNC:15328"/>
<dbReference type="CTD" id="219957"/>
<dbReference type="DisGeNET" id="219957"/>
<dbReference type="GeneCards" id="OR9Q2"/>
<dbReference type="HGNC" id="HGNC:15328">
    <property type="gene designation" value="OR9Q2"/>
</dbReference>
<dbReference type="HPA" id="ENSG00000186513">
    <property type="expression patterns" value="Not detected"/>
</dbReference>
<dbReference type="neXtProt" id="NX_Q8NGE9"/>
<dbReference type="PharmGKB" id="PA32806"/>
<dbReference type="VEuPathDB" id="HostDB:ENSG00000186513"/>
<dbReference type="eggNOG" id="ENOG502RF13">
    <property type="taxonomic scope" value="Eukaryota"/>
</dbReference>
<dbReference type="GeneTree" id="ENSGT01120000271831"/>
<dbReference type="HOGENOM" id="CLU_012526_5_5_1"/>
<dbReference type="InParanoid" id="Q8NGE9"/>
<dbReference type="OMA" id="FVMPACV"/>
<dbReference type="OrthoDB" id="9445793at2759"/>
<dbReference type="PAN-GO" id="Q8NGE9">
    <property type="GO annotations" value="4 GO annotations based on evolutionary models"/>
</dbReference>
<dbReference type="PhylomeDB" id="Q8NGE9"/>
<dbReference type="TreeFam" id="TF337111"/>
<dbReference type="PathwayCommons" id="Q8NGE9"/>
<dbReference type="Reactome" id="R-HSA-9752946">
    <property type="pathway name" value="Expression and translocation of olfactory receptors"/>
</dbReference>
<dbReference type="SignaLink" id="Q8NGE9"/>
<dbReference type="BioGRID-ORCS" id="219957">
    <property type="hits" value="13 hits in 741 CRISPR screens"/>
</dbReference>
<dbReference type="GenomeRNAi" id="219957"/>
<dbReference type="Pharos" id="Q8NGE9">
    <property type="development level" value="Tdark"/>
</dbReference>
<dbReference type="PRO" id="PR:Q8NGE9"/>
<dbReference type="Proteomes" id="UP000005640">
    <property type="component" value="Chromosome 11"/>
</dbReference>
<dbReference type="RNAct" id="Q8NGE9">
    <property type="molecule type" value="protein"/>
</dbReference>
<dbReference type="ExpressionAtlas" id="Q8NGE9">
    <property type="expression patterns" value="baseline and differential"/>
</dbReference>
<dbReference type="GO" id="GO:0005886">
    <property type="term" value="C:plasma membrane"/>
    <property type="evidence" value="ECO:0007669"/>
    <property type="project" value="UniProtKB-SubCell"/>
</dbReference>
<dbReference type="GO" id="GO:0004930">
    <property type="term" value="F:G protein-coupled receptor activity"/>
    <property type="evidence" value="ECO:0007669"/>
    <property type="project" value="UniProtKB-KW"/>
</dbReference>
<dbReference type="GO" id="GO:0005549">
    <property type="term" value="F:odorant binding"/>
    <property type="evidence" value="ECO:0000318"/>
    <property type="project" value="GO_Central"/>
</dbReference>
<dbReference type="GO" id="GO:0004984">
    <property type="term" value="F:olfactory receptor activity"/>
    <property type="evidence" value="ECO:0000318"/>
    <property type="project" value="GO_Central"/>
</dbReference>
<dbReference type="GO" id="GO:0007186">
    <property type="term" value="P:G protein-coupled receptor signaling pathway"/>
    <property type="evidence" value="ECO:0000318"/>
    <property type="project" value="GO_Central"/>
</dbReference>
<dbReference type="GO" id="GO:0007608">
    <property type="term" value="P:sensory perception of smell"/>
    <property type="evidence" value="ECO:0000318"/>
    <property type="project" value="GO_Central"/>
</dbReference>
<dbReference type="CDD" id="cd15230">
    <property type="entry name" value="7tmA_OR5-like"/>
    <property type="match status" value="1"/>
</dbReference>
<dbReference type="FunFam" id="1.10.1220.70:FF:000001">
    <property type="entry name" value="Olfactory receptor"/>
    <property type="match status" value="1"/>
</dbReference>
<dbReference type="FunFam" id="1.20.1070.10:FF:000003">
    <property type="entry name" value="Olfactory receptor"/>
    <property type="match status" value="1"/>
</dbReference>
<dbReference type="Gene3D" id="1.20.1070.10">
    <property type="entry name" value="Rhodopsin 7-helix transmembrane proteins"/>
    <property type="match status" value="1"/>
</dbReference>
<dbReference type="InterPro" id="IPR000276">
    <property type="entry name" value="GPCR_Rhodpsn"/>
</dbReference>
<dbReference type="InterPro" id="IPR017452">
    <property type="entry name" value="GPCR_Rhodpsn_7TM"/>
</dbReference>
<dbReference type="InterPro" id="IPR000725">
    <property type="entry name" value="Olfact_rcpt"/>
</dbReference>
<dbReference type="PANTHER" id="PTHR48018">
    <property type="entry name" value="OLFACTORY RECEPTOR"/>
    <property type="match status" value="1"/>
</dbReference>
<dbReference type="Pfam" id="PF13853">
    <property type="entry name" value="7tm_4"/>
    <property type="match status" value="1"/>
</dbReference>
<dbReference type="PRINTS" id="PR00237">
    <property type="entry name" value="GPCRRHODOPSN"/>
</dbReference>
<dbReference type="PRINTS" id="PR00245">
    <property type="entry name" value="OLFACTORYR"/>
</dbReference>
<dbReference type="SUPFAM" id="SSF81321">
    <property type="entry name" value="Family A G protein-coupled receptor-like"/>
    <property type="match status" value="1"/>
</dbReference>
<dbReference type="PROSITE" id="PS00237">
    <property type="entry name" value="G_PROTEIN_RECEP_F1_1"/>
    <property type="match status" value="1"/>
</dbReference>
<dbReference type="PROSITE" id="PS50262">
    <property type="entry name" value="G_PROTEIN_RECEP_F1_2"/>
    <property type="match status" value="1"/>
</dbReference>
<name>OR9Q2_HUMAN</name>
<feature type="chain" id="PRO_0000150684" description="Olfactory receptor 9Q2">
    <location>
        <begin position="1"/>
        <end position="314"/>
    </location>
</feature>
<feature type="topological domain" description="Extracellular" evidence="1">
    <location>
        <begin position="1"/>
        <end position="25"/>
    </location>
</feature>
<feature type="transmembrane region" description="Helical; Name=1" evidence="1">
    <location>
        <begin position="26"/>
        <end position="46"/>
    </location>
</feature>
<feature type="topological domain" description="Cytoplasmic" evidence="1">
    <location>
        <begin position="47"/>
        <end position="54"/>
    </location>
</feature>
<feature type="transmembrane region" description="Helical; Name=2" evidence="1">
    <location>
        <begin position="55"/>
        <end position="75"/>
    </location>
</feature>
<feature type="topological domain" description="Extracellular" evidence="1">
    <location>
        <begin position="76"/>
        <end position="99"/>
    </location>
</feature>
<feature type="transmembrane region" description="Helical; Name=3" evidence="1">
    <location>
        <begin position="100"/>
        <end position="120"/>
    </location>
</feature>
<feature type="topological domain" description="Cytoplasmic" evidence="1">
    <location>
        <begin position="121"/>
        <end position="139"/>
    </location>
</feature>
<feature type="transmembrane region" description="Helical; Name=4" evidence="1">
    <location>
        <begin position="140"/>
        <end position="160"/>
    </location>
</feature>
<feature type="topological domain" description="Extracellular" evidence="1">
    <location>
        <begin position="161"/>
        <end position="197"/>
    </location>
</feature>
<feature type="transmembrane region" description="Helical; Name=5" evidence="1">
    <location>
        <begin position="198"/>
        <end position="217"/>
    </location>
</feature>
<feature type="topological domain" description="Cytoplasmic" evidence="1">
    <location>
        <begin position="218"/>
        <end position="237"/>
    </location>
</feature>
<feature type="transmembrane region" description="Helical; Name=6" evidence="1">
    <location>
        <begin position="238"/>
        <end position="258"/>
    </location>
</feature>
<feature type="topological domain" description="Extracellular" evidence="1">
    <location>
        <begin position="259"/>
        <end position="271"/>
    </location>
</feature>
<feature type="transmembrane region" description="Helical; Name=7" evidence="1">
    <location>
        <begin position="272"/>
        <end position="292"/>
    </location>
</feature>
<feature type="topological domain" description="Cytoplasmic" evidence="1">
    <location>
        <begin position="293"/>
        <end position="314"/>
    </location>
</feature>
<feature type="glycosylation site" description="N-linked (GlcNAc...) asparagine" evidence="1">
    <location>
        <position position="5"/>
    </location>
</feature>
<feature type="disulfide bond" evidence="2">
    <location>
        <begin position="97"/>
        <end position="189"/>
    </location>
</feature>
<feature type="sequence variant" id="VAR_062061" description="In dbSNP:rs34337292.">
    <original>C</original>
    <variation>R</variation>
    <location>
        <position position="179"/>
    </location>
</feature>
<feature type="sequence conflict" description="In Ref. 2; AAI40719." evidence="3" ref="2">
    <original>K</original>
    <variation>E</variation>
    <location>
        <position position="303"/>
    </location>
</feature>
<organism>
    <name type="scientific">Homo sapiens</name>
    <name type="common">Human</name>
    <dbReference type="NCBI Taxonomy" id="9606"/>
    <lineage>
        <taxon>Eukaryota</taxon>
        <taxon>Metazoa</taxon>
        <taxon>Chordata</taxon>
        <taxon>Craniata</taxon>
        <taxon>Vertebrata</taxon>
        <taxon>Euteleostomi</taxon>
        <taxon>Mammalia</taxon>
        <taxon>Eutheria</taxon>
        <taxon>Euarchontoglires</taxon>
        <taxon>Primates</taxon>
        <taxon>Haplorrhini</taxon>
        <taxon>Catarrhini</taxon>
        <taxon>Hominidae</taxon>
        <taxon>Homo</taxon>
    </lineage>
</organism>
<proteinExistence type="evidence at transcript level"/>
<reference key="1">
    <citation type="submission" date="2001-07" db="EMBL/GenBank/DDBJ databases">
        <title>Genome-wide discovery and analysis of human seven transmembrane helix receptor genes.</title>
        <authorList>
            <person name="Suwa M."/>
            <person name="Sato T."/>
            <person name="Okouchi I."/>
            <person name="Arita M."/>
            <person name="Futami K."/>
            <person name="Matsumoto S."/>
            <person name="Tsutsumi S."/>
            <person name="Aburatani H."/>
            <person name="Asai K."/>
            <person name="Akiyama Y."/>
        </authorList>
    </citation>
    <scope>NUCLEOTIDE SEQUENCE [GENOMIC DNA]</scope>
</reference>
<reference key="2">
    <citation type="journal article" date="2004" name="Genome Res.">
        <title>The status, quality, and expansion of the NIH full-length cDNA project: the Mammalian Gene Collection (MGC).</title>
        <authorList>
            <consortium name="The MGC Project Team"/>
        </authorList>
    </citation>
    <scope>NUCLEOTIDE SEQUENCE [LARGE SCALE MRNA]</scope>
</reference>
<accession>Q8NGE9</accession>
<accession>B9EIK5</accession>
<keyword id="KW-1003">Cell membrane</keyword>
<keyword id="KW-1015">Disulfide bond</keyword>
<keyword id="KW-0297">G-protein coupled receptor</keyword>
<keyword id="KW-0325">Glycoprotein</keyword>
<keyword id="KW-0472">Membrane</keyword>
<keyword id="KW-0552">Olfaction</keyword>
<keyword id="KW-0675">Receptor</keyword>
<keyword id="KW-1185">Reference proteome</keyword>
<keyword id="KW-0716">Sensory transduction</keyword>
<keyword id="KW-0807">Transducer</keyword>
<keyword id="KW-0812">Transmembrane</keyword>
<keyword id="KW-1133">Transmembrane helix</keyword>